<feature type="chain" id="PRO_0000078196" description="Snake venom metalloproteinase adamalysin-2">
    <location>
        <begin position="1"/>
        <end position="203"/>
    </location>
</feature>
<feature type="domain" description="Peptidase M12B" evidence="2">
    <location>
        <begin position="7"/>
        <end position="203"/>
    </location>
</feature>
<feature type="active site" evidence="2 3">
    <location>
        <position position="144"/>
    </location>
</feature>
<feature type="binding site" evidence="4">
    <location>
        <position position="10"/>
    </location>
    <ligand>
        <name>Ca(2+)</name>
        <dbReference type="ChEBI" id="CHEBI:29108"/>
    </ligand>
</feature>
<feature type="binding site" evidence="4">
    <location>
        <position position="94"/>
    </location>
    <ligand>
        <name>Ca(2+)</name>
        <dbReference type="ChEBI" id="CHEBI:29108"/>
    </ligand>
</feature>
<feature type="binding site">
    <location>
        <position position="143"/>
    </location>
    <ligand>
        <name>Zn(2+)</name>
        <dbReference type="ChEBI" id="CHEBI:29105"/>
        <note>catalytic</note>
    </ligand>
</feature>
<feature type="binding site">
    <location>
        <position position="147"/>
    </location>
    <ligand>
        <name>Zn(2+)</name>
        <dbReference type="ChEBI" id="CHEBI:29105"/>
        <note>catalytic</note>
    </ligand>
</feature>
<feature type="binding site">
    <location>
        <position position="153"/>
    </location>
    <ligand>
        <name>Zn(2+)</name>
        <dbReference type="ChEBI" id="CHEBI:29105"/>
        <note>catalytic</note>
    </ligand>
</feature>
<feature type="binding site" evidence="4">
    <location>
        <position position="198"/>
    </location>
    <ligand>
        <name>Ca(2+)</name>
        <dbReference type="ChEBI" id="CHEBI:29108"/>
    </ligand>
</feature>
<feature type="binding site" evidence="4">
    <location>
        <position position="201"/>
    </location>
    <ligand>
        <name>Ca(2+)</name>
        <dbReference type="ChEBI" id="CHEBI:29108"/>
    </ligand>
</feature>
<feature type="disulfide bond">
    <location>
        <begin position="118"/>
        <end position="198"/>
    </location>
</feature>
<feature type="disulfide bond">
    <location>
        <begin position="158"/>
        <end position="165"/>
    </location>
</feature>
<feature type="strand" evidence="6">
    <location>
        <begin position="7"/>
        <end position="15"/>
    </location>
</feature>
<feature type="helix" evidence="6">
    <location>
        <begin position="17"/>
        <end position="22"/>
    </location>
</feature>
<feature type="turn" evidence="6">
    <location>
        <begin position="23"/>
        <end position="25"/>
    </location>
</feature>
<feature type="helix" evidence="6">
    <location>
        <begin position="27"/>
        <end position="45"/>
    </location>
</feature>
<feature type="helix" evidence="6">
    <location>
        <begin position="46"/>
        <end position="48"/>
    </location>
</feature>
<feature type="strand" evidence="6">
    <location>
        <begin position="50"/>
        <end position="59"/>
    </location>
</feature>
<feature type="helix" evidence="6">
    <location>
        <begin position="72"/>
        <end position="85"/>
    </location>
</feature>
<feature type="turn" evidence="6">
    <location>
        <begin position="86"/>
        <end position="89"/>
    </location>
</feature>
<feature type="strand" evidence="6">
    <location>
        <begin position="94"/>
        <end position="100"/>
    </location>
</feature>
<feature type="helix" evidence="6">
    <location>
        <begin position="105"/>
        <end position="107"/>
    </location>
</feature>
<feature type="strand" evidence="6">
    <location>
        <begin position="110"/>
        <end position="112"/>
    </location>
</feature>
<feature type="turn" evidence="6">
    <location>
        <begin position="120"/>
        <end position="122"/>
    </location>
</feature>
<feature type="strand" evidence="6">
    <location>
        <begin position="123"/>
        <end position="128"/>
    </location>
</feature>
<feature type="helix" evidence="6">
    <location>
        <begin position="134"/>
        <end position="148"/>
    </location>
</feature>
<feature type="strand" evidence="6">
    <location>
        <begin position="163"/>
        <end position="165"/>
    </location>
</feature>
<feature type="strand" evidence="6">
    <location>
        <begin position="168"/>
        <end position="170"/>
    </location>
</feature>
<feature type="helix" evidence="6">
    <location>
        <begin position="181"/>
        <end position="194"/>
    </location>
</feature>
<feature type="helix" evidence="7">
    <location>
        <begin position="197"/>
        <end position="199"/>
    </location>
</feature>
<keyword id="KW-0002">3D-structure</keyword>
<keyword id="KW-0106">Calcium</keyword>
<keyword id="KW-0903">Direct protein sequencing</keyword>
<keyword id="KW-1015">Disulfide bond</keyword>
<keyword id="KW-0378">Hydrolase</keyword>
<keyword id="KW-0479">Metal-binding</keyword>
<keyword id="KW-0482">Metalloprotease</keyword>
<keyword id="KW-0645">Protease</keyword>
<keyword id="KW-0964">Secreted</keyword>
<keyword id="KW-0862">Zinc</keyword>
<comment type="function">
    <text>Has no significant hemorrhagic activity, but inactivates serpins by limited proteolysis of their reactive-site loops.</text>
</comment>
<comment type="catalytic activity">
    <reaction>
        <text>Cleavage of 1-Phe-|-Val-2, 5-His-|-Leu-6, 14-Ala-|-Leu-15, 15-Leu-|-Tyr-16, and 16-Tyr-|-Leu-17 of insulin B chain.</text>
        <dbReference type="EC" id="3.4.24.46"/>
    </reaction>
</comment>
<comment type="cofactor">
    <cofactor evidence="1">
        <name>Zn(2+)</name>
        <dbReference type="ChEBI" id="CHEBI:29105"/>
    </cofactor>
    <text evidence="1">Binds 1 zinc ion per subunit.</text>
</comment>
<comment type="subunit">
    <text evidence="4">Monomer.</text>
</comment>
<comment type="subcellular location">
    <subcellularLocation>
        <location>Secreted</location>
    </subcellularLocation>
</comment>
<comment type="tissue specificity">
    <text>Expressed by the venom gland.</text>
</comment>
<comment type="similarity">
    <text evidence="5">Belongs to the venom metalloproteinase (M12B) family. P-I subfamily.</text>
</comment>
<reference key="1">
    <citation type="journal article" date="1993" name="EMBO J.">
        <title>First structure of a snake venom metalloproteinase: a prototype for matrix metalloproteinases/collagenases.</title>
        <authorList>
            <person name="Gomis-Rueth F.-X."/>
            <person name="Kress L.F."/>
            <person name="Bode W."/>
        </authorList>
    </citation>
    <scope>PARTIAL PROTEIN SEQUENCE</scope>
    <scope>X-RAY CRYSTALLOGRAPHY (2.0 ANGSTROMS)</scope>
    <source>
        <tissue>Venom</tissue>
    </source>
</reference>
<reference key="2">
    <citation type="journal article" date="1994" name="J. Mol. Biol.">
        <title>Refined 2.0 A X-ray crystal structure of the snake venom zinc-endopeptidase adamalysin II. Primary and tertiary structure determination, refinement, molecular structure and comparison with astacin, collagenase and thermolysin.</title>
        <authorList>
            <person name="Gomis-Rueth F.-X."/>
            <person name="Kress L.F."/>
            <person name="Kellerman J."/>
            <person name="Mayr I."/>
            <person name="Lee X."/>
            <person name="Huber R."/>
            <person name="Bode W."/>
        </authorList>
    </citation>
    <scope>PARTIAL PROTEIN SEQUENCE</scope>
    <scope>X-RAY CRYSTALLOGRAPHY (2.0 ANGSTROMS)</scope>
    <source>
        <tissue>Venom</tissue>
    </source>
</reference>
<reference key="3">
    <citation type="journal article" date="1997" name="FEBS Lett.">
        <title>2-A X-ray structure of adamalysin II complexed with a peptide phosphonate inhibitor adopting a retro-binding mode.</title>
        <authorList>
            <person name="Cirilli M."/>
            <person name="Gallina C."/>
            <person name="Gavuzzo E."/>
            <person name="Giordano C."/>
            <person name="Gomis-Rueth F.-X."/>
            <person name="Gorini B."/>
            <person name="Kress L.F."/>
            <person name="Mazza F."/>
            <person name="Paradisi M.P."/>
            <person name="Pochetti G."/>
            <person name="Politi V."/>
        </authorList>
    </citation>
    <scope>X-RAY CRYSTALLOGRAPHY (2.0 ANGSTROMS) OF COMPLEX WITH AN INHIBITOR</scope>
</reference>
<reference key="4">
    <citation type="journal article" date="1998" name="Protein Sci.">
        <title>Structures of adamalysin II with peptidic inhibitors. Implications for the design of tumor necrosis factor alpha convertase inhibitors.</title>
        <authorList>
            <person name="Gomis-Rueth F.-X."/>
            <person name="Meyer E.F."/>
            <person name="Kress L.F."/>
            <person name="Politi V."/>
        </authorList>
    </citation>
    <scope>X-RAY CRYSTALLOGRAPHY (2.8 ANGSTROMS) IN COMPLEX WITH CALCIUM AND ZINC IONS</scope>
    <scope>METAL-BINDING SITES</scope>
</reference>
<proteinExistence type="evidence at protein level"/>
<accession>P34179</accession>
<dbReference type="EC" id="3.4.24.46"/>
<dbReference type="PDB" id="1IAG">
    <property type="method" value="X-ray"/>
    <property type="resolution" value="2.00 A"/>
    <property type="chains" value="A=3-203"/>
</dbReference>
<dbReference type="PDB" id="2AIG">
    <property type="method" value="X-ray"/>
    <property type="resolution" value="2.60 A"/>
    <property type="chains" value="P=3-203"/>
</dbReference>
<dbReference type="PDB" id="3AIG">
    <property type="method" value="X-ray"/>
    <property type="resolution" value="2.80 A"/>
    <property type="chains" value="A=3-203"/>
</dbReference>
<dbReference type="PDB" id="4AIG">
    <property type="method" value="X-ray"/>
    <property type="resolution" value="2.00 A"/>
    <property type="chains" value="A=3-203"/>
</dbReference>
<dbReference type="PDBsum" id="1IAG"/>
<dbReference type="PDBsum" id="2AIG"/>
<dbReference type="PDBsum" id="3AIG"/>
<dbReference type="PDBsum" id="4AIG"/>
<dbReference type="SMR" id="P34179"/>
<dbReference type="MEROPS" id="M12.141"/>
<dbReference type="EvolutionaryTrace" id="P34179"/>
<dbReference type="GO" id="GO:0005576">
    <property type="term" value="C:extracellular region"/>
    <property type="evidence" value="ECO:0007669"/>
    <property type="project" value="UniProtKB-SubCell"/>
</dbReference>
<dbReference type="GO" id="GO:0005886">
    <property type="term" value="C:plasma membrane"/>
    <property type="evidence" value="ECO:0007669"/>
    <property type="project" value="TreeGrafter"/>
</dbReference>
<dbReference type="GO" id="GO:0046872">
    <property type="term" value="F:metal ion binding"/>
    <property type="evidence" value="ECO:0007669"/>
    <property type="project" value="UniProtKB-KW"/>
</dbReference>
<dbReference type="GO" id="GO:0004222">
    <property type="term" value="F:metalloendopeptidase activity"/>
    <property type="evidence" value="ECO:0007669"/>
    <property type="project" value="InterPro"/>
</dbReference>
<dbReference type="GO" id="GO:0006508">
    <property type="term" value="P:proteolysis"/>
    <property type="evidence" value="ECO:0007669"/>
    <property type="project" value="UniProtKB-KW"/>
</dbReference>
<dbReference type="CDD" id="cd04269">
    <property type="entry name" value="ZnMc_adamalysin_II_like"/>
    <property type="match status" value="1"/>
</dbReference>
<dbReference type="FunFam" id="3.40.390.10:FF:000002">
    <property type="entry name" value="Disintegrin and metalloproteinase domain-containing protein 22"/>
    <property type="match status" value="1"/>
</dbReference>
<dbReference type="Gene3D" id="3.40.390.10">
    <property type="entry name" value="Collagenase (Catalytic Domain)"/>
    <property type="match status" value="1"/>
</dbReference>
<dbReference type="InterPro" id="IPR024079">
    <property type="entry name" value="MetalloPept_cat_dom_sf"/>
</dbReference>
<dbReference type="InterPro" id="IPR001590">
    <property type="entry name" value="Peptidase_M12B"/>
</dbReference>
<dbReference type="InterPro" id="IPR034027">
    <property type="entry name" value="Reprolysin_adamalysin"/>
</dbReference>
<dbReference type="PANTHER" id="PTHR11905">
    <property type="entry name" value="ADAM A DISINTEGRIN AND METALLOPROTEASE DOMAIN"/>
    <property type="match status" value="1"/>
</dbReference>
<dbReference type="PANTHER" id="PTHR11905:SF32">
    <property type="entry name" value="DISINTEGRIN AND METALLOPROTEINASE DOMAIN-CONTAINING PROTEIN 28"/>
    <property type="match status" value="1"/>
</dbReference>
<dbReference type="Pfam" id="PF01421">
    <property type="entry name" value="Reprolysin"/>
    <property type="match status" value="1"/>
</dbReference>
<dbReference type="SUPFAM" id="SSF55486">
    <property type="entry name" value="Metalloproteases ('zincins'), catalytic domain"/>
    <property type="match status" value="1"/>
</dbReference>
<dbReference type="PROSITE" id="PS50215">
    <property type="entry name" value="ADAM_MEPRO"/>
    <property type="match status" value="1"/>
</dbReference>
<dbReference type="PROSITE" id="PS00142">
    <property type="entry name" value="ZINC_PROTEASE"/>
    <property type="match status" value="1"/>
</dbReference>
<sequence length="203" mass="23076">QQNLPQRYIELVVVADRRVFMKYNSDLNIIRTRVHEIVNIINGFYRSLNIDVSLVNLEIWSGQDPLTIQSSSSNTLNSEGLWREKVLLNKKKKDNAQLLTAIEFKCETLGKAYLNSMCNPRSSVGIVKDHSPINLLVAVTMAHELGHNLGMEHDGKDCLRGASLCIMRPGLTPGRSYEFSDDSMGYYQKFLNQYKPQCILNKP</sequence>
<protein>
    <recommendedName>
        <fullName>Snake venom metalloproteinase adamalysin-2</fullName>
        <shortName>SVMP</shortName>
        <ecNumber>3.4.24.46</ecNumber>
    </recommendedName>
    <alternativeName>
        <fullName>Adamalysin II</fullName>
    </alternativeName>
    <alternativeName>
        <fullName>Proteinase II</fullName>
    </alternativeName>
</protein>
<name>VM12_CROAD</name>
<organism>
    <name type="scientific">Crotalus adamanteus</name>
    <name type="common">Eastern diamondback rattlesnake</name>
    <dbReference type="NCBI Taxonomy" id="8729"/>
    <lineage>
        <taxon>Eukaryota</taxon>
        <taxon>Metazoa</taxon>
        <taxon>Chordata</taxon>
        <taxon>Craniata</taxon>
        <taxon>Vertebrata</taxon>
        <taxon>Euteleostomi</taxon>
        <taxon>Lepidosauria</taxon>
        <taxon>Squamata</taxon>
        <taxon>Bifurcata</taxon>
        <taxon>Unidentata</taxon>
        <taxon>Episquamata</taxon>
        <taxon>Toxicofera</taxon>
        <taxon>Serpentes</taxon>
        <taxon>Colubroidea</taxon>
        <taxon>Viperidae</taxon>
        <taxon>Crotalinae</taxon>
        <taxon>Crotalus</taxon>
    </lineage>
</organism>
<evidence type="ECO:0000250" key="1"/>
<evidence type="ECO:0000255" key="2">
    <source>
        <dbReference type="PROSITE-ProRule" id="PRU00276"/>
    </source>
</evidence>
<evidence type="ECO:0000255" key="3">
    <source>
        <dbReference type="PROSITE-ProRule" id="PRU10095"/>
    </source>
</evidence>
<evidence type="ECO:0000269" key="4">
    <source>
    </source>
</evidence>
<evidence type="ECO:0000305" key="5"/>
<evidence type="ECO:0007829" key="6">
    <source>
        <dbReference type="PDB" id="1IAG"/>
    </source>
</evidence>
<evidence type="ECO:0007829" key="7">
    <source>
        <dbReference type="PDB" id="4AIG"/>
    </source>
</evidence>